<feature type="signal peptide" evidence="1">
    <location>
        <begin position="1"/>
        <end position="23"/>
    </location>
</feature>
<feature type="chain" id="PRO_0000282132" description="Uncharacterized lipoprotein SA0092">
    <location>
        <begin position="24"/>
        <end position="255"/>
    </location>
</feature>
<feature type="lipid moiety-binding region" description="N-palmitoyl cysteine" evidence="1">
    <location>
        <position position="24"/>
    </location>
</feature>
<feature type="lipid moiety-binding region" description="S-diacylglycerol cysteine" evidence="1">
    <location>
        <position position="24"/>
    </location>
</feature>
<dbReference type="EMBL" id="BA000018">
    <property type="protein sequence ID" value="BAB41311.1"/>
    <property type="status" value="ALT_INIT"/>
    <property type="molecule type" value="Genomic_DNA"/>
</dbReference>
<dbReference type="PIR" id="D89769">
    <property type="entry name" value="D89769"/>
</dbReference>
<dbReference type="SMR" id="Q7A887"/>
<dbReference type="EnsemblBacteria" id="BAB41311">
    <property type="protein sequence ID" value="BAB41311"/>
    <property type="gene ID" value="BAB41311"/>
</dbReference>
<dbReference type="KEGG" id="sau:SA0092"/>
<dbReference type="HOGENOM" id="CLU_071589_0_1_9"/>
<dbReference type="GO" id="GO:0005886">
    <property type="term" value="C:plasma membrane"/>
    <property type="evidence" value="ECO:0007669"/>
    <property type="project" value="UniProtKB-SubCell"/>
</dbReference>
<dbReference type="Gene3D" id="2.50.20.40">
    <property type="match status" value="1"/>
</dbReference>
<dbReference type="InterPro" id="IPR007595">
    <property type="entry name" value="Csa"/>
</dbReference>
<dbReference type="InterPro" id="IPR038641">
    <property type="entry name" value="Csa_sf"/>
</dbReference>
<dbReference type="NCBIfam" id="TIGR01742">
    <property type="entry name" value="SA_tandem_lipo"/>
    <property type="match status" value="1"/>
</dbReference>
<dbReference type="Pfam" id="PF04507">
    <property type="entry name" value="DUF576"/>
    <property type="match status" value="1"/>
</dbReference>
<dbReference type="PROSITE" id="PS51257">
    <property type="entry name" value="PROKAR_LIPOPROTEIN"/>
    <property type="match status" value="1"/>
</dbReference>
<accession>Q7A887</accession>
<keyword id="KW-1003">Cell membrane</keyword>
<keyword id="KW-0449">Lipoprotein</keyword>
<keyword id="KW-0472">Membrane</keyword>
<keyword id="KW-0564">Palmitate</keyword>
<keyword id="KW-0732">Signal</keyword>
<name>Y092_STAAN</name>
<evidence type="ECO:0000255" key="1">
    <source>
        <dbReference type="PROSITE-ProRule" id="PRU00303"/>
    </source>
</evidence>
<evidence type="ECO:0000305" key="2"/>
<proteinExistence type="inferred from homology"/>
<protein>
    <recommendedName>
        <fullName>Uncharacterized lipoprotein SA0092</fullName>
    </recommendedName>
</protein>
<reference key="1">
    <citation type="journal article" date="2001" name="Lancet">
        <title>Whole genome sequencing of meticillin-resistant Staphylococcus aureus.</title>
        <authorList>
            <person name="Kuroda M."/>
            <person name="Ohta T."/>
            <person name="Uchiyama I."/>
            <person name="Baba T."/>
            <person name="Yuzawa H."/>
            <person name="Kobayashi I."/>
            <person name="Cui L."/>
            <person name="Oguchi A."/>
            <person name="Aoki K."/>
            <person name="Nagai Y."/>
            <person name="Lian J.-Q."/>
            <person name="Ito T."/>
            <person name="Kanamori M."/>
            <person name="Matsumaru H."/>
            <person name="Maruyama A."/>
            <person name="Murakami H."/>
            <person name="Hosoyama A."/>
            <person name="Mizutani-Ui Y."/>
            <person name="Takahashi N.K."/>
            <person name="Sawano T."/>
            <person name="Inoue R."/>
            <person name="Kaito C."/>
            <person name="Sekimizu K."/>
            <person name="Hirakawa H."/>
            <person name="Kuhara S."/>
            <person name="Goto S."/>
            <person name="Yabuzaki J."/>
            <person name="Kanehisa M."/>
            <person name="Yamashita A."/>
            <person name="Oshima K."/>
            <person name="Furuya K."/>
            <person name="Yoshino C."/>
            <person name="Shiba T."/>
            <person name="Hattori M."/>
            <person name="Ogasawara N."/>
            <person name="Hayashi H."/>
            <person name="Hiramatsu K."/>
        </authorList>
    </citation>
    <scope>NUCLEOTIDE SEQUENCE [LARGE SCALE GENOMIC DNA]</scope>
    <source>
        <strain>N315</strain>
    </source>
</reference>
<gene>
    <name type="ordered locus">SA0092</name>
</gene>
<organism>
    <name type="scientific">Staphylococcus aureus (strain N315)</name>
    <dbReference type="NCBI Taxonomy" id="158879"/>
    <lineage>
        <taxon>Bacteria</taxon>
        <taxon>Bacillati</taxon>
        <taxon>Bacillota</taxon>
        <taxon>Bacilli</taxon>
        <taxon>Bacillales</taxon>
        <taxon>Staphylococcaceae</taxon>
        <taxon>Staphylococcus</taxon>
    </lineage>
</organism>
<sequence length="255" mass="29612">MKRLNKLVLGIIFLFLVISITAGCGIGKEAEVKKSFEKTLSMYPIKNLEDLYDKEGYRDDQFDKNDKGTWIINSEMVIQPNNEDMVAKGMVLYMNRNTKTTNGYYYVDVTKDEDEGKPHDNEKRYPVKMVDNKIIPTKEIKDKNIKKEIENFKFFVQYGNFKDLSKYKDGDISYNPEVPSYSAKYQVTNDDYNVKQLRKRYDIPTNKAPKLLLKGTGNLKGSSVGYKDIEFTFVEKKGENIYFSDSLHLEPSEDK</sequence>
<comment type="subcellular location">
    <subcellularLocation>
        <location evidence="1">Cell membrane</location>
        <topology evidence="1">Lipid-anchor</topology>
    </subcellularLocation>
</comment>
<comment type="similarity">
    <text evidence="2">Belongs to the staphylococcal tandem lipoprotein family.</text>
</comment>
<comment type="sequence caution" evidence="2">
    <conflict type="erroneous initiation">
        <sequence resource="EMBL-CDS" id="BAB41311"/>
    </conflict>
</comment>